<proteinExistence type="inferred from homology"/>
<protein>
    <recommendedName>
        <fullName evidence="1">Small ribosomal subunit protein uS7</fullName>
    </recommendedName>
    <alternativeName>
        <fullName evidence="2">30S ribosomal protein S7</fullName>
    </alternativeName>
</protein>
<gene>
    <name evidence="1" type="primary">rpsG</name>
    <name type="ordered locus">Shewana3_0195</name>
</gene>
<keyword id="KW-0687">Ribonucleoprotein</keyword>
<keyword id="KW-0689">Ribosomal protein</keyword>
<keyword id="KW-0694">RNA-binding</keyword>
<keyword id="KW-0699">rRNA-binding</keyword>
<keyword id="KW-0820">tRNA-binding</keyword>
<accession>A0KRM0</accession>
<organism>
    <name type="scientific">Shewanella sp. (strain ANA-3)</name>
    <dbReference type="NCBI Taxonomy" id="94122"/>
    <lineage>
        <taxon>Bacteria</taxon>
        <taxon>Pseudomonadati</taxon>
        <taxon>Pseudomonadota</taxon>
        <taxon>Gammaproteobacteria</taxon>
        <taxon>Alteromonadales</taxon>
        <taxon>Shewanellaceae</taxon>
        <taxon>Shewanella</taxon>
    </lineage>
</organism>
<evidence type="ECO:0000255" key="1">
    <source>
        <dbReference type="HAMAP-Rule" id="MF_00480"/>
    </source>
</evidence>
<evidence type="ECO:0000305" key="2"/>
<name>RS7_SHESA</name>
<comment type="function">
    <text evidence="1">One of the primary rRNA binding proteins, it binds directly to 16S rRNA where it nucleates assembly of the head domain of the 30S subunit. Is located at the subunit interface close to the decoding center, probably blocks exit of the E-site tRNA.</text>
</comment>
<comment type="subunit">
    <text evidence="1">Part of the 30S ribosomal subunit. Contacts proteins S9 and S11.</text>
</comment>
<comment type="similarity">
    <text evidence="1">Belongs to the universal ribosomal protein uS7 family.</text>
</comment>
<feature type="chain" id="PRO_1000014287" description="Small ribosomal subunit protein uS7">
    <location>
        <begin position="1"/>
        <end position="156"/>
    </location>
</feature>
<sequence>MPRRRVVGQRKILPDPKFHSELLAKFINVIMQDGKKSTAEKIIYKALDVIAEKKGANHLDVLEAALDNVRPSVEVKSRRVGGSTYQVPCEVRPVRRNALAMRWLVEAARKRGEKSMALRLAGEMLDASENKGTAVKKREDVHRMAEANKAFAHYRW</sequence>
<reference key="1">
    <citation type="submission" date="2006-09" db="EMBL/GenBank/DDBJ databases">
        <title>Complete sequence of chromosome 1 of Shewanella sp. ANA-3.</title>
        <authorList>
            <person name="Copeland A."/>
            <person name="Lucas S."/>
            <person name="Lapidus A."/>
            <person name="Barry K."/>
            <person name="Detter J.C."/>
            <person name="Glavina del Rio T."/>
            <person name="Hammon N."/>
            <person name="Israni S."/>
            <person name="Dalin E."/>
            <person name="Tice H."/>
            <person name="Pitluck S."/>
            <person name="Chertkov O."/>
            <person name="Brettin T."/>
            <person name="Bruce D."/>
            <person name="Han C."/>
            <person name="Tapia R."/>
            <person name="Gilna P."/>
            <person name="Schmutz J."/>
            <person name="Larimer F."/>
            <person name="Land M."/>
            <person name="Hauser L."/>
            <person name="Kyrpides N."/>
            <person name="Kim E."/>
            <person name="Newman D."/>
            <person name="Salticov C."/>
            <person name="Konstantinidis K."/>
            <person name="Klappenback J."/>
            <person name="Tiedje J."/>
            <person name="Richardson P."/>
        </authorList>
    </citation>
    <scope>NUCLEOTIDE SEQUENCE [LARGE SCALE GENOMIC DNA]</scope>
    <source>
        <strain>ANA-3</strain>
    </source>
</reference>
<dbReference type="EMBL" id="CP000469">
    <property type="protein sequence ID" value="ABK46439.1"/>
    <property type="molecule type" value="Genomic_DNA"/>
</dbReference>
<dbReference type="RefSeq" id="WP_011715460.1">
    <property type="nucleotide sequence ID" value="NC_008577.1"/>
</dbReference>
<dbReference type="SMR" id="A0KRM0"/>
<dbReference type="STRING" id="94122.Shewana3_0195"/>
<dbReference type="GeneID" id="94726182"/>
<dbReference type="KEGG" id="shn:Shewana3_0195"/>
<dbReference type="eggNOG" id="COG0049">
    <property type="taxonomic scope" value="Bacteria"/>
</dbReference>
<dbReference type="HOGENOM" id="CLU_072226_1_1_6"/>
<dbReference type="OrthoDB" id="9807653at2"/>
<dbReference type="Proteomes" id="UP000002589">
    <property type="component" value="Chromosome"/>
</dbReference>
<dbReference type="GO" id="GO:0015935">
    <property type="term" value="C:small ribosomal subunit"/>
    <property type="evidence" value="ECO:0007669"/>
    <property type="project" value="InterPro"/>
</dbReference>
<dbReference type="GO" id="GO:0019843">
    <property type="term" value="F:rRNA binding"/>
    <property type="evidence" value="ECO:0007669"/>
    <property type="project" value="UniProtKB-UniRule"/>
</dbReference>
<dbReference type="GO" id="GO:0003735">
    <property type="term" value="F:structural constituent of ribosome"/>
    <property type="evidence" value="ECO:0007669"/>
    <property type="project" value="InterPro"/>
</dbReference>
<dbReference type="GO" id="GO:0000049">
    <property type="term" value="F:tRNA binding"/>
    <property type="evidence" value="ECO:0007669"/>
    <property type="project" value="UniProtKB-UniRule"/>
</dbReference>
<dbReference type="GO" id="GO:0006412">
    <property type="term" value="P:translation"/>
    <property type="evidence" value="ECO:0007669"/>
    <property type="project" value="UniProtKB-UniRule"/>
</dbReference>
<dbReference type="CDD" id="cd14869">
    <property type="entry name" value="uS7_Bacteria"/>
    <property type="match status" value="1"/>
</dbReference>
<dbReference type="FunFam" id="1.10.455.10:FF:000001">
    <property type="entry name" value="30S ribosomal protein S7"/>
    <property type="match status" value="1"/>
</dbReference>
<dbReference type="Gene3D" id="1.10.455.10">
    <property type="entry name" value="Ribosomal protein S7 domain"/>
    <property type="match status" value="1"/>
</dbReference>
<dbReference type="HAMAP" id="MF_00480_B">
    <property type="entry name" value="Ribosomal_uS7_B"/>
    <property type="match status" value="1"/>
</dbReference>
<dbReference type="InterPro" id="IPR000235">
    <property type="entry name" value="Ribosomal_uS7"/>
</dbReference>
<dbReference type="InterPro" id="IPR005717">
    <property type="entry name" value="Ribosomal_uS7_bac/org-type"/>
</dbReference>
<dbReference type="InterPro" id="IPR020606">
    <property type="entry name" value="Ribosomal_uS7_CS"/>
</dbReference>
<dbReference type="InterPro" id="IPR023798">
    <property type="entry name" value="Ribosomal_uS7_dom"/>
</dbReference>
<dbReference type="InterPro" id="IPR036823">
    <property type="entry name" value="Ribosomal_uS7_dom_sf"/>
</dbReference>
<dbReference type="NCBIfam" id="TIGR01029">
    <property type="entry name" value="rpsG_bact"/>
    <property type="match status" value="1"/>
</dbReference>
<dbReference type="PANTHER" id="PTHR11205">
    <property type="entry name" value="RIBOSOMAL PROTEIN S7"/>
    <property type="match status" value="1"/>
</dbReference>
<dbReference type="Pfam" id="PF00177">
    <property type="entry name" value="Ribosomal_S7"/>
    <property type="match status" value="1"/>
</dbReference>
<dbReference type="PIRSF" id="PIRSF002122">
    <property type="entry name" value="RPS7p_RPS7a_RPS5e_RPS7o"/>
    <property type="match status" value="1"/>
</dbReference>
<dbReference type="SUPFAM" id="SSF47973">
    <property type="entry name" value="Ribosomal protein S7"/>
    <property type="match status" value="1"/>
</dbReference>
<dbReference type="PROSITE" id="PS00052">
    <property type="entry name" value="RIBOSOMAL_S7"/>
    <property type="match status" value="1"/>
</dbReference>